<name>VP5_AQRVC</name>
<feature type="chain" id="PRO_0000404189" description="Microtubule-associated protein VP5">
    <location>
        <begin position="1"/>
        <end position="728"/>
    </location>
</feature>
<accession>Q8JU58</accession>
<organism>
    <name type="scientific">Aquareovirus C (isolate Golden shiner/USA/GSRV/1977)</name>
    <name type="common">AQRV-C</name>
    <dbReference type="NCBI Taxonomy" id="185783"/>
    <lineage>
        <taxon>Viruses</taxon>
        <taxon>Riboviria</taxon>
        <taxon>Orthornavirae</taxon>
        <taxon>Duplornaviricota</taxon>
        <taxon>Resentoviricetes</taxon>
        <taxon>Reovirales</taxon>
        <taxon>Spinareoviridae</taxon>
        <taxon>Aquareovirus</taxon>
        <taxon>Aquareovirus ctenopharyngodontis</taxon>
    </lineage>
</organism>
<proteinExistence type="evidence at protein level"/>
<dbReference type="EMBL" id="AF403402">
    <property type="protein sequence ID" value="AAM92748.1"/>
    <property type="molecule type" value="Genomic_RNA"/>
</dbReference>
<dbReference type="RefSeq" id="NP_938064.1">
    <property type="nucleotide sequence ID" value="NC_005170.1"/>
</dbReference>
<dbReference type="PDB" id="8FJK">
    <property type="method" value="EM"/>
    <property type="resolution" value="3.30 A"/>
    <property type="chains" value="B=1-718"/>
</dbReference>
<dbReference type="PDB" id="8FJL">
    <property type="method" value="EM"/>
    <property type="resolution" value="3.27 A"/>
    <property type="chains" value="B=1-718"/>
</dbReference>
<dbReference type="PDBsum" id="8FJK"/>
<dbReference type="PDBsum" id="8FJL"/>
<dbReference type="EMDB" id="EMD-29243"/>
<dbReference type="EMDB" id="EMD-29244"/>
<dbReference type="SMR" id="Q8JU58"/>
<dbReference type="KEGG" id="vg:2648333"/>
<dbReference type="Proteomes" id="UP000006713">
    <property type="component" value="Genome"/>
</dbReference>
<dbReference type="GO" id="GO:0030430">
    <property type="term" value="C:host cell cytoplasm"/>
    <property type="evidence" value="ECO:0007669"/>
    <property type="project" value="UniProtKB-KW"/>
</dbReference>
<dbReference type="GO" id="GO:0044163">
    <property type="term" value="C:host cytoskeleton"/>
    <property type="evidence" value="ECO:0007669"/>
    <property type="project" value="UniProtKB-SubCell"/>
</dbReference>
<dbReference type="GO" id="GO:0039624">
    <property type="term" value="C:viral outer capsid"/>
    <property type="evidence" value="ECO:0007669"/>
    <property type="project" value="UniProtKB-KW"/>
</dbReference>
<dbReference type="GO" id="GO:0005198">
    <property type="term" value="F:structural molecule activity"/>
    <property type="evidence" value="ECO:0007669"/>
    <property type="project" value="InterPro"/>
</dbReference>
<dbReference type="InterPro" id="IPR012494">
    <property type="entry name" value="Reovirus_Mu2"/>
</dbReference>
<dbReference type="Pfam" id="PF07781">
    <property type="entry name" value="Reovirus_Mu2"/>
    <property type="match status" value="1"/>
</dbReference>
<protein>
    <recommendedName>
        <fullName>Microtubule-associated protein VP5</fullName>
    </recommendedName>
</protein>
<gene>
    <name type="primary">S5</name>
</gene>
<organismHost>
    <name type="scientific">Notemigonus crysoleucas</name>
    <name type="common">Golden shiner</name>
    <name type="synonym">Cyprinus crysoleucas</name>
    <dbReference type="NCBI Taxonomy" id="28800"/>
</organismHost>
<organismHost>
    <name type="scientific">Pimephales promelas</name>
    <name type="common">Fathead minnow</name>
    <dbReference type="NCBI Taxonomy" id="90988"/>
</organismHost>
<keyword id="KW-0002">3D-structure</keyword>
<keyword id="KW-0167">Capsid protein</keyword>
<keyword id="KW-1035">Host cytoplasm</keyword>
<keyword id="KW-1037">Host cytoskeleton</keyword>
<keyword id="KW-1152">Outer capsid protein</keyword>
<keyword id="KW-1185">Reference proteome</keyword>
<keyword id="KW-0946">Virion</keyword>
<sequence length="728" mass="80247">MITIVVIPTAHFSWTDTNFLNSVDYRLTSQPKIRDRFAVYAPGWLRRQLDEFSASLTASELLQALQTIPIPVKARCLLLPKPKRFAQWLLDVPSANIWHIPVTTLRATVASKHPSSDVYNYIPDHVPPSAEFDTVTRRVAAGRDIYVRSTKVLGAPLCLAAPAKYYAGYLSTHQLDGVYPDNWAPDNFHKREFCLTILPSLLGPRTFLLDVDADRDASYPLSVLWPQLRVLALKSRLLLPPVALLRRVVDPGLKPTWSADSDAAFRALRLSRPSSASKPTGFDFSALPVVDIICLFESEPDDHGRVAPGTRLTIHSVPTDLLTSLSIQEGVRYPLRQESGMFVPWVLLALLMSDDVTISGTRRSVKLETAHASARPFVHITVERCASARVVDVRGSPAMYANAVCLTLPKGSYKSTIIDTLPAMFSDLSILEQAAVIDSDALGDSLRPSFETQFLERLENLDPKLLDRAVASILSPASDTSDDAVTTVLDVFNALYREVMTPAQRSRLPLLTQQGRVLAFAHSDYELLSANIPIQVVRGSIPIDHVVNLLARRNRVGGTALQVLLDYCYRTQASPLAPTPAGRLYKQLFGPWLMVPRLSDPLIKLRLVASAPAKVLRAAGWTIDGDPPLEVSCLCAYVTDRAMAAALIERRLDSRALVNVGGDQLMFVEYAPPLPLVSIPRTFLLPVTYVVHWVSPQRVLLNGGNVSFTSGLEWTFDDDPQVVTSTGV</sequence>
<evidence type="ECO:0000250" key="1"/>
<evidence type="ECO:0000305" key="2"/>
<comment type="function">
    <text evidence="1">Minor inner capsid component. Displays NTPase and RNA 5'-triphosphatase (RTPase) activities. May function as a cofactor of polymerase. Associates with microtubules and plays a role in the formation, structural organization and morphology of viral inclusions, where the assembly of cores and the replication of viral RNA occur (By similarity).</text>
</comment>
<comment type="subcellular location">
    <subcellularLocation>
        <location evidence="1">Virion</location>
    </subcellularLocation>
    <subcellularLocation>
        <location evidence="1">Host cytoplasm</location>
        <location evidence="1">Host cytoskeleton</location>
    </subcellularLocation>
</comment>
<comment type="similarity">
    <text evidence="2">Belongs to the reoviridae microtubule-associated protein family.</text>
</comment>
<reference key="1">
    <citation type="journal article" date="2002" name="J. Gen. Virol.">
        <title>Common evolutionary origin of aquareoviruses and orthoreoviruses revealed by genome characterization of Golden shiner reovirus, Grass carp reovirus, Striped bass reovirus and golden ide reovirus (genus Aquareovirus, family Reoviridae).</title>
        <authorList>
            <person name="Attoui H."/>
            <person name="Fang Q."/>
            <person name="Mohd Jaafar F."/>
            <person name="Cantaloube J.F."/>
            <person name="Biagini P."/>
            <person name="de Micco P."/>
            <person name="de Lamballerie X."/>
        </authorList>
    </citation>
    <scope>NUCLEOTIDE SEQUENCE [GENOMIC RNA]</scope>
</reference>